<comment type="function">
    <text evidence="1">Specifically methylates the N7 position of a guanine in 16S rRNA.</text>
</comment>
<comment type="subcellular location">
    <subcellularLocation>
        <location evidence="1">Cytoplasm</location>
    </subcellularLocation>
</comment>
<comment type="similarity">
    <text evidence="1">Belongs to the methyltransferase superfamily. RNA methyltransferase RsmG family.</text>
</comment>
<sequence>METTNKANTMMAELKTLCNKDNIVLSLSQYEKLVGYALLLEDWNNKINLISRKEDAPILIKHVFHSLLIGLFHQFSSSEKVLDLGTGGGLPGIPLAIAWPDTQFLLVDATGKKIAACQSMIKSLDIKNAVAVHSRVEELKGMSFDTVLSRQVAQLEQLCSYASKILKPGGRLICLKGGNLDHEIKKALAGKKEKGSFPSVVEQFPVSGYSPCFTEKHIVIAR</sequence>
<evidence type="ECO:0000255" key="1">
    <source>
        <dbReference type="HAMAP-Rule" id="MF_00074"/>
    </source>
</evidence>
<protein>
    <recommendedName>
        <fullName evidence="1">Ribosomal RNA small subunit methyltransferase G</fullName>
        <ecNumber evidence="1">2.1.1.-</ecNumber>
    </recommendedName>
    <alternativeName>
        <fullName evidence="1">16S rRNA 7-methylguanosine methyltransferase</fullName>
        <shortName evidence="1">16S rRNA m7G methyltransferase</shortName>
    </alternativeName>
</protein>
<keyword id="KW-0963">Cytoplasm</keyword>
<keyword id="KW-0489">Methyltransferase</keyword>
<keyword id="KW-1185">Reference proteome</keyword>
<keyword id="KW-0698">rRNA processing</keyword>
<keyword id="KW-0949">S-adenosyl-L-methionine</keyword>
<keyword id="KW-0808">Transferase</keyword>
<organism>
    <name type="scientific">Chlorobium phaeobacteroides (strain DSM 266 / SMG 266 / 2430)</name>
    <dbReference type="NCBI Taxonomy" id="290317"/>
    <lineage>
        <taxon>Bacteria</taxon>
        <taxon>Pseudomonadati</taxon>
        <taxon>Chlorobiota</taxon>
        <taxon>Chlorobiia</taxon>
        <taxon>Chlorobiales</taxon>
        <taxon>Chlorobiaceae</taxon>
        <taxon>Chlorobium/Pelodictyon group</taxon>
        <taxon>Chlorobium</taxon>
    </lineage>
</organism>
<proteinExistence type="inferred from homology"/>
<gene>
    <name evidence="1" type="primary">rsmG</name>
    <name type="ordered locus">Cpha266_2394</name>
</gene>
<feature type="chain" id="PRO_1000010132" description="Ribosomal RNA small subunit methyltransferase G">
    <location>
        <begin position="1"/>
        <end position="222"/>
    </location>
</feature>
<feature type="binding site" evidence="1">
    <location>
        <position position="85"/>
    </location>
    <ligand>
        <name>S-adenosyl-L-methionine</name>
        <dbReference type="ChEBI" id="CHEBI:59789"/>
    </ligand>
</feature>
<feature type="binding site" evidence="1">
    <location>
        <position position="90"/>
    </location>
    <ligand>
        <name>S-adenosyl-L-methionine</name>
        <dbReference type="ChEBI" id="CHEBI:59789"/>
    </ligand>
</feature>
<feature type="binding site" evidence="1">
    <location>
        <begin position="108"/>
        <end position="110"/>
    </location>
    <ligand>
        <name>S-adenosyl-L-methionine</name>
        <dbReference type="ChEBI" id="CHEBI:59789"/>
    </ligand>
</feature>
<feature type="binding site" evidence="1">
    <location>
        <begin position="136"/>
        <end position="137"/>
    </location>
    <ligand>
        <name>S-adenosyl-L-methionine</name>
        <dbReference type="ChEBI" id="CHEBI:59789"/>
    </ligand>
</feature>
<feature type="binding site" evidence="1">
    <location>
        <position position="150"/>
    </location>
    <ligand>
        <name>S-adenosyl-L-methionine</name>
        <dbReference type="ChEBI" id="CHEBI:59789"/>
    </ligand>
</feature>
<reference key="1">
    <citation type="submission" date="2006-12" db="EMBL/GenBank/DDBJ databases">
        <title>Complete sequence of Chlorobium phaeobacteroides DSM 266.</title>
        <authorList>
            <consortium name="US DOE Joint Genome Institute"/>
            <person name="Copeland A."/>
            <person name="Lucas S."/>
            <person name="Lapidus A."/>
            <person name="Barry K."/>
            <person name="Detter J.C."/>
            <person name="Glavina del Rio T."/>
            <person name="Hammon N."/>
            <person name="Israni S."/>
            <person name="Pitluck S."/>
            <person name="Goltsman E."/>
            <person name="Schmutz J."/>
            <person name="Larimer F."/>
            <person name="Land M."/>
            <person name="Hauser L."/>
            <person name="Mikhailova N."/>
            <person name="Li T."/>
            <person name="Overmann J."/>
            <person name="Bryant D.A."/>
            <person name="Richardson P."/>
        </authorList>
    </citation>
    <scope>NUCLEOTIDE SEQUENCE [LARGE SCALE GENOMIC DNA]</scope>
    <source>
        <strain>DSM 266 / SMG 266 / 2430</strain>
    </source>
</reference>
<dbReference type="EC" id="2.1.1.-" evidence="1"/>
<dbReference type="EMBL" id="CP000492">
    <property type="protein sequence ID" value="ABL66382.1"/>
    <property type="molecule type" value="Genomic_DNA"/>
</dbReference>
<dbReference type="RefSeq" id="WP_011746165.1">
    <property type="nucleotide sequence ID" value="NC_008639.1"/>
</dbReference>
<dbReference type="SMR" id="A1BJ05"/>
<dbReference type="STRING" id="290317.Cpha266_2394"/>
<dbReference type="KEGG" id="cph:Cpha266_2394"/>
<dbReference type="eggNOG" id="COG0357">
    <property type="taxonomic scope" value="Bacteria"/>
</dbReference>
<dbReference type="HOGENOM" id="CLU_065341_2_2_10"/>
<dbReference type="OrthoDB" id="9808773at2"/>
<dbReference type="Proteomes" id="UP000008701">
    <property type="component" value="Chromosome"/>
</dbReference>
<dbReference type="GO" id="GO:0005829">
    <property type="term" value="C:cytosol"/>
    <property type="evidence" value="ECO:0007669"/>
    <property type="project" value="TreeGrafter"/>
</dbReference>
<dbReference type="GO" id="GO:0070043">
    <property type="term" value="F:rRNA (guanine-N7-)-methyltransferase activity"/>
    <property type="evidence" value="ECO:0007669"/>
    <property type="project" value="UniProtKB-UniRule"/>
</dbReference>
<dbReference type="CDD" id="cd02440">
    <property type="entry name" value="AdoMet_MTases"/>
    <property type="match status" value="1"/>
</dbReference>
<dbReference type="Gene3D" id="3.40.50.150">
    <property type="entry name" value="Vaccinia Virus protein VP39"/>
    <property type="match status" value="1"/>
</dbReference>
<dbReference type="HAMAP" id="MF_00074">
    <property type="entry name" value="16SrRNA_methyltr_G"/>
    <property type="match status" value="1"/>
</dbReference>
<dbReference type="InterPro" id="IPR003682">
    <property type="entry name" value="rRNA_ssu_MeTfrase_G"/>
</dbReference>
<dbReference type="InterPro" id="IPR029063">
    <property type="entry name" value="SAM-dependent_MTases_sf"/>
</dbReference>
<dbReference type="NCBIfam" id="TIGR00138">
    <property type="entry name" value="rsmG_gidB"/>
    <property type="match status" value="1"/>
</dbReference>
<dbReference type="PANTHER" id="PTHR31760">
    <property type="entry name" value="S-ADENOSYL-L-METHIONINE-DEPENDENT METHYLTRANSFERASES SUPERFAMILY PROTEIN"/>
    <property type="match status" value="1"/>
</dbReference>
<dbReference type="PANTHER" id="PTHR31760:SF0">
    <property type="entry name" value="S-ADENOSYL-L-METHIONINE-DEPENDENT METHYLTRANSFERASES SUPERFAMILY PROTEIN"/>
    <property type="match status" value="1"/>
</dbReference>
<dbReference type="Pfam" id="PF02527">
    <property type="entry name" value="GidB"/>
    <property type="match status" value="1"/>
</dbReference>
<dbReference type="PIRSF" id="PIRSF003078">
    <property type="entry name" value="GidB"/>
    <property type="match status" value="1"/>
</dbReference>
<dbReference type="SUPFAM" id="SSF53335">
    <property type="entry name" value="S-adenosyl-L-methionine-dependent methyltransferases"/>
    <property type="match status" value="1"/>
</dbReference>
<name>RSMG_CHLPD</name>
<accession>A1BJ05</accession>